<dbReference type="EC" id="6.1.1.22"/>
<dbReference type="EMBL" id="AE009950">
    <property type="protein sequence ID" value="AAL80279.1"/>
    <property type="status" value="ALT_INIT"/>
    <property type="molecule type" value="Genomic_DNA"/>
</dbReference>
<dbReference type="RefSeq" id="WP_014835459.1">
    <property type="nucleotide sequence ID" value="NZ_CP023154.1"/>
</dbReference>
<dbReference type="SMR" id="Q8U4D3"/>
<dbReference type="STRING" id="186497.PF0155"/>
<dbReference type="PaxDb" id="186497-PF0155"/>
<dbReference type="GeneID" id="41711945"/>
<dbReference type="KEGG" id="pfu:PF0155"/>
<dbReference type="PATRIC" id="fig|186497.12.peg.161"/>
<dbReference type="eggNOG" id="arCOG00407">
    <property type="taxonomic scope" value="Archaea"/>
</dbReference>
<dbReference type="HOGENOM" id="CLU_004553_2_0_2"/>
<dbReference type="OrthoDB" id="5908at2157"/>
<dbReference type="PhylomeDB" id="Q8U4D3"/>
<dbReference type="Proteomes" id="UP000001013">
    <property type="component" value="Chromosome"/>
</dbReference>
<dbReference type="GO" id="GO:0005737">
    <property type="term" value="C:cytoplasm"/>
    <property type="evidence" value="ECO:0007669"/>
    <property type="project" value="UniProtKB-SubCell"/>
</dbReference>
<dbReference type="GO" id="GO:0004816">
    <property type="term" value="F:asparagine-tRNA ligase activity"/>
    <property type="evidence" value="ECO:0007669"/>
    <property type="project" value="UniProtKB-UniRule"/>
</dbReference>
<dbReference type="GO" id="GO:0005524">
    <property type="term" value="F:ATP binding"/>
    <property type="evidence" value="ECO:0007669"/>
    <property type="project" value="UniProtKB-UniRule"/>
</dbReference>
<dbReference type="GO" id="GO:0003676">
    <property type="term" value="F:nucleic acid binding"/>
    <property type="evidence" value="ECO:0007669"/>
    <property type="project" value="InterPro"/>
</dbReference>
<dbReference type="GO" id="GO:0006421">
    <property type="term" value="P:asparaginyl-tRNA aminoacylation"/>
    <property type="evidence" value="ECO:0007669"/>
    <property type="project" value="UniProtKB-UniRule"/>
</dbReference>
<dbReference type="CDD" id="cd00776">
    <property type="entry name" value="AsxRS_core"/>
    <property type="match status" value="1"/>
</dbReference>
<dbReference type="CDD" id="cd04319">
    <property type="entry name" value="PhAsnRS_like_N"/>
    <property type="match status" value="1"/>
</dbReference>
<dbReference type="Gene3D" id="3.30.930.10">
    <property type="entry name" value="Bira Bifunctional Protein, Domain 2"/>
    <property type="match status" value="1"/>
</dbReference>
<dbReference type="Gene3D" id="2.40.50.140">
    <property type="entry name" value="Nucleic acid-binding proteins"/>
    <property type="match status" value="1"/>
</dbReference>
<dbReference type="HAMAP" id="MF_00534">
    <property type="entry name" value="Asn_tRNA_synth"/>
    <property type="match status" value="1"/>
</dbReference>
<dbReference type="InterPro" id="IPR004364">
    <property type="entry name" value="Aa-tRNA-synt_II"/>
</dbReference>
<dbReference type="InterPro" id="IPR006195">
    <property type="entry name" value="aa-tRNA-synth_II"/>
</dbReference>
<dbReference type="InterPro" id="IPR045864">
    <property type="entry name" value="aa-tRNA-synth_II/BPL/LPL"/>
</dbReference>
<dbReference type="InterPro" id="IPR004522">
    <property type="entry name" value="Asn-tRNA-ligase"/>
</dbReference>
<dbReference type="InterPro" id="IPR002312">
    <property type="entry name" value="Asp/Asn-tRNA-synth_IIb"/>
</dbReference>
<dbReference type="InterPro" id="IPR012340">
    <property type="entry name" value="NA-bd_OB-fold"/>
</dbReference>
<dbReference type="InterPro" id="IPR004365">
    <property type="entry name" value="NA-bd_OB_tRNA"/>
</dbReference>
<dbReference type="NCBIfam" id="TIGR00457">
    <property type="entry name" value="asnS"/>
    <property type="match status" value="1"/>
</dbReference>
<dbReference type="NCBIfam" id="NF003037">
    <property type="entry name" value="PRK03932.1"/>
    <property type="match status" value="1"/>
</dbReference>
<dbReference type="NCBIfam" id="NF003483">
    <property type="entry name" value="PRK05159.1"/>
    <property type="match status" value="1"/>
</dbReference>
<dbReference type="PANTHER" id="PTHR22594:SF34">
    <property type="entry name" value="ASPARAGINE--TRNA LIGASE, MITOCHONDRIAL-RELATED"/>
    <property type="match status" value="1"/>
</dbReference>
<dbReference type="PANTHER" id="PTHR22594">
    <property type="entry name" value="ASPARTYL/LYSYL-TRNA SYNTHETASE"/>
    <property type="match status" value="1"/>
</dbReference>
<dbReference type="Pfam" id="PF00152">
    <property type="entry name" value="tRNA-synt_2"/>
    <property type="match status" value="1"/>
</dbReference>
<dbReference type="Pfam" id="PF01336">
    <property type="entry name" value="tRNA_anti-codon"/>
    <property type="match status" value="1"/>
</dbReference>
<dbReference type="PRINTS" id="PR01042">
    <property type="entry name" value="TRNASYNTHASP"/>
</dbReference>
<dbReference type="SUPFAM" id="SSF55681">
    <property type="entry name" value="Class II aaRS and biotin synthetases"/>
    <property type="match status" value="1"/>
</dbReference>
<dbReference type="SUPFAM" id="SSF50249">
    <property type="entry name" value="Nucleic acid-binding proteins"/>
    <property type="match status" value="1"/>
</dbReference>
<dbReference type="PROSITE" id="PS50862">
    <property type="entry name" value="AA_TRNA_LIGASE_II"/>
    <property type="match status" value="1"/>
</dbReference>
<evidence type="ECO:0000305" key="1"/>
<gene>
    <name type="primary">asnS</name>
    <name type="ordered locus">PF0155</name>
</gene>
<organism>
    <name type="scientific">Pyrococcus furiosus (strain ATCC 43587 / DSM 3638 / JCM 8422 / Vc1)</name>
    <dbReference type="NCBI Taxonomy" id="186497"/>
    <lineage>
        <taxon>Archaea</taxon>
        <taxon>Methanobacteriati</taxon>
        <taxon>Methanobacteriota</taxon>
        <taxon>Thermococci</taxon>
        <taxon>Thermococcales</taxon>
        <taxon>Thermococcaceae</taxon>
        <taxon>Pyrococcus</taxon>
    </lineage>
</organism>
<name>SYN_PYRFU</name>
<keyword id="KW-0030">Aminoacyl-tRNA synthetase</keyword>
<keyword id="KW-0067">ATP-binding</keyword>
<keyword id="KW-0963">Cytoplasm</keyword>
<keyword id="KW-0436">Ligase</keyword>
<keyword id="KW-0547">Nucleotide-binding</keyword>
<keyword id="KW-0648">Protein biosynthesis</keyword>
<keyword id="KW-1185">Reference proteome</keyword>
<comment type="catalytic activity">
    <reaction>
        <text>tRNA(Asn) + L-asparagine + ATP = L-asparaginyl-tRNA(Asn) + AMP + diphosphate + H(+)</text>
        <dbReference type="Rhea" id="RHEA:11180"/>
        <dbReference type="Rhea" id="RHEA-COMP:9659"/>
        <dbReference type="Rhea" id="RHEA-COMP:9674"/>
        <dbReference type="ChEBI" id="CHEBI:15378"/>
        <dbReference type="ChEBI" id="CHEBI:30616"/>
        <dbReference type="ChEBI" id="CHEBI:33019"/>
        <dbReference type="ChEBI" id="CHEBI:58048"/>
        <dbReference type="ChEBI" id="CHEBI:78442"/>
        <dbReference type="ChEBI" id="CHEBI:78515"/>
        <dbReference type="ChEBI" id="CHEBI:456215"/>
        <dbReference type="EC" id="6.1.1.22"/>
    </reaction>
</comment>
<comment type="subcellular location">
    <subcellularLocation>
        <location>Cytoplasm</location>
    </subcellularLocation>
</comment>
<comment type="similarity">
    <text evidence="1">Belongs to the class-II aminoacyl-tRNA synthetase family.</text>
</comment>
<comment type="sequence caution" evidence="1">
    <conflict type="erroneous initiation">
        <sequence resource="EMBL-CDS" id="AAL80279"/>
    </conflict>
</comment>
<accession>Q8U4D3</accession>
<proteinExistence type="inferred from homology"/>
<protein>
    <recommendedName>
        <fullName>Asparagine--tRNA ligase</fullName>
        <ecNumber>6.1.1.22</ecNumber>
    </recommendedName>
    <alternativeName>
        <fullName>Asparaginyl-tRNA synthetase</fullName>
        <shortName>AsnRS</shortName>
    </alternativeName>
</protein>
<feature type="chain" id="PRO_0000176486" description="Asparagine--tRNA ligase">
    <location>
        <begin position="1"/>
        <end position="434"/>
    </location>
</feature>
<sequence>MIEKVYCSEVKPELEGKKVKLAGWVYSNMKVGKKIFLWIRDSTGIVQTVIAKNVVGEEVFEKAKKLGRESSVIVEGIVKADERAPGGAEVRVEKLEVIQAVSEFPIPENPEQASPELLLDYRHLHIRTPKASAIMKVKETLIMAAREWLLKDGWHEVFPPILVTGAVEGGATLFKLKYFDKYAYLSQSAQLYLEAAIFGLEKVWSLTPSFRAEKSRTRRHLTEFWHLELEAAWMDLWDIMKVEEELVSYMVQRTLELRKKEIEMFRDDLTTLKNTEPPFPRISYDEAIDILQSKGINVQWGDDLGADEERVLTEEFDRPFFVYGYPKQIKAFYMKEDPNDPRKVLAADMLAPEGYGEIIGGSQREDDYEKLLNRILEEGMDPKDYEWYLDLRKYGSVPHSGFGLGVERLVAWVLKLDHIRWASLFPRTPARLYP</sequence>
<reference key="1">
    <citation type="journal article" date="1999" name="Genetics">
        <title>Divergence of the hyperthermophilic archaea Pyrococcus furiosus and P. horikoshii inferred from complete genomic sequences.</title>
        <authorList>
            <person name="Maeder D.L."/>
            <person name="Weiss R.B."/>
            <person name="Dunn D.M."/>
            <person name="Cherry J.L."/>
            <person name="Gonzalez J.M."/>
            <person name="DiRuggiero J."/>
            <person name="Robb F.T."/>
        </authorList>
    </citation>
    <scope>NUCLEOTIDE SEQUENCE [LARGE SCALE GENOMIC DNA]</scope>
    <source>
        <strain>ATCC 43587 / DSM 3638 / JCM 8422 / Vc1</strain>
    </source>
</reference>